<reference key="1">
    <citation type="submission" date="2006-03" db="EMBL/GenBank/DDBJ databases">
        <title>Complete sequence of Methylobacillus flagellatus KT.</title>
        <authorList>
            <consortium name="US DOE Joint Genome Institute"/>
            <person name="Copeland A."/>
            <person name="Lucas S."/>
            <person name="Lapidus A."/>
            <person name="Barry K."/>
            <person name="Detter J.C."/>
            <person name="Glavina del Rio T."/>
            <person name="Hammon N."/>
            <person name="Israni S."/>
            <person name="Dalin E."/>
            <person name="Tice H."/>
            <person name="Pitluck S."/>
            <person name="Brettin T."/>
            <person name="Bruce D."/>
            <person name="Han C."/>
            <person name="Tapia R."/>
            <person name="Saunders E."/>
            <person name="Gilna P."/>
            <person name="Schmutz J."/>
            <person name="Larimer F."/>
            <person name="Land M."/>
            <person name="Kyrpides N."/>
            <person name="Anderson I."/>
            <person name="Richardson P."/>
        </authorList>
    </citation>
    <scope>NUCLEOTIDE SEQUENCE [LARGE SCALE GENOMIC DNA]</scope>
    <source>
        <strain>ATCC 51484 / DSM 6875 / VKM B-1610 / KT</strain>
    </source>
</reference>
<gene>
    <name evidence="1" type="primary">hemC</name>
    <name type="ordered locus">Mfla_0035</name>
</gene>
<feature type="chain" id="PRO_0000304249" description="Porphobilinogen deaminase">
    <location>
        <begin position="1"/>
        <end position="310"/>
    </location>
</feature>
<feature type="modified residue" description="S-(dipyrrolylmethanemethyl)cysteine" evidence="1">
    <location>
        <position position="243"/>
    </location>
</feature>
<name>HEM3_METFK</name>
<keyword id="KW-0627">Porphyrin biosynthesis</keyword>
<keyword id="KW-1185">Reference proteome</keyword>
<keyword id="KW-0808">Transferase</keyword>
<proteinExistence type="inferred from homology"/>
<accession>Q1GXA1</accession>
<protein>
    <recommendedName>
        <fullName evidence="1">Porphobilinogen deaminase</fullName>
        <shortName evidence="1">PBG</shortName>
        <ecNumber evidence="1">2.5.1.61</ecNumber>
    </recommendedName>
    <alternativeName>
        <fullName evidence="1">Hydroxymethylbilane synthase</fullName>
        <shortName evidence="1">HMBS</shortName>
    </alternativeName>
    <alternativeName>
        <fullName evidence="1">Pre-uroporphyrinogen synthase</fullName>
    </alternativeName>
</protein>
<comment type="function">
    <text evidence="1">Tetrapolymerization of the monopyrrole PBG into the hydroxymethylbilane pre-uroporphyrinogen in several discrete steps.</text>
</comment>
<comment type="catalytic activity">
    <reaction evidence="1">
        <text>4 porphobilinogen + H2O = hydroxymethylbilane + 4 NH4(+)</text>
        <dbReference type="Rhea" id="RHEA:13185"/>
        <dbReference type="ChEBI" id="CHEBI:15377"/>
        <dbReference type="ChEBI" id="CHEBI:28938"/>
        <dbReference type="ChEBI" id="CHEBI:57845"/>
        <dbReference type="ChEBI" id="CHEBI:58126"/>
        <dbReference type="EC" id="2.5.1.61"/>
    </reaction>
</comment>
<comment type="cofactor">
    <cofactor evidence="1">
        <name>dipyrromethane</name>
        <dbReference type="ChEBI" id="CHEBI:60342"/>
    </cofactor>
    <text evidence="1">Binds 1 dipyrromethane group covalently.</text>
</comment>
<comment type="pathway">
    <text evidence="1">Porphyrin-containing compound metabolism; protoporphyrin-IX biosynthesis; coproporphyrinogen-III from 5-aminolevulinate: step 2/4.</text>
</comment>
<comment type="subunit">
    <text evidence="1">Monomer.</text>
</comment>
<comment type="miscellaneous">
    <text evidence="1">The porphobilinogen subunits are added to the dipyrromethane group.</text>
</comment>
<comment type="similarity">
    <text evidence="1">Belongs to the HMBS family.</text>
</comment>
<organism>
    <name type="scientific">Methylobacillus flagellatus (strain ATCC 51484 / DSM 6875 / VKM B-1610 / KT)</name>
    <dbReference type="NCBI Taxonomy" id="265072"/>
    <lineage>
        <taxon>Bacteria</taxon>
        <taxon>Pseudomonadati</taxon>
        <taxon>Pseudomonadota</taxon>
        <taxon>Betaproteobacteria</taxon>
        <taxon>Nitrosomonadales</taxon>
        <taxon>Methylophilaceae</taxon>
        <taxon>Methylobacillus</taxon>
    </lineage>
</organism>
<evidence type="ECO:0000255" key="1">
    <source>
        <dbReference type="HAMAP-Rule" id="MF_00260"/>
    </source>
</evidence>
<dbReference type="EC" id="2.5.1.61" evidence="1"/>
<dbReference type="EMBL" id="CP000284">
    <property type="protein sequence ID" value="ABE48306.1"/>
    <property type="molecule type" value="Genomic_DNA"/>
</dbReference>
<dbReference type="RefSeq" id="WP_011478403.1">
    <property type="nucleotide sequence ID" value="NC_007947.1"/>
</dbReference>
<dbReference type="SMR" id="Q1GXA1"/>
<dbReference type="STRING" id="265072.Mfla_0035"/>
<dbReference type="KEGG" id="mfa:Mfla_0035"/>
<dbReference type="eggNOG" id="COG0181">
    <property type="taxonomic scope" value="Bacteria"/>
</dbReference>
<dbReference type="HOGENOM" id="CLU_019704_0_2_4"/>
<dbReference type="OrthoDB" id="9810298at2"/>
<dbReference type="UniPathway" id="UPA00251">
    <property type="reaction ID" value="UER00319"/>
</dbReference>
<dbReference type="Proteomes" id="UP000002440">
    <property type="component" value="Chromosome"/>
</dbReference>
<dbReference type="GO" id="GO:0005737">
    <property type="term" value="C:cytoplasm"/>
    <property type="evidence" value="ECO:0007669"/>
    <property type="project" value="TreeGrafter"/>
</dbReference>
<dbReference type="GO" id="GO:0004418">
    <property type="term" value="F:hydroxymethylbilane synthase activity"/>
    <property type="evidence" value="ECO:0007669"/>
    <property type="project" value="UniProtKB-UniRule"/>
</dbReference>
<dbReference type="GO" id="GO:0006782">
    <property type="term" value="P:protoporphyrinogen IX biosynthetic process"/>
    <property type="evidence" value="ECO:0007669"/>
    <property type="project" value="UniProtKB-UniRule"/>
</dbReference>
<dbReference type="CDD" id="cd13646">
    <property type="entry name" value="PBP2_EcHMBS_like"/>
    <property type="match status" value="1"/>
</dbReference>
<dbReference type="FunFam" id="3.40.190.10:FF:000004">
    <property type="entry name" value="Porphobilinogen deaminase"/>
    <property type="match status" value="1"/>
</dbReference>
<dbReference type="FunFam" id="3.40.190.10:FF:000005">
    <property type="entry name" value="Porphobilinogen deaminase"/>
    <property type="match status" value="1"/>
</dbReference>
<dbReference type="Gene3D" id="3.40.190.10">
    <property type="entry name" value="Periplasmic binding protein-like II"/>
    <property type="match status" value="2"/>
</dbReference>
<dbReference type="Gene3D" id="3.30.160.40">
    <property type="entry name" value="Porphobilinogen deaminase, C-terminal domain"/>
    <property type="match status" value="1"/>
</dbReference>
<dbReference type="HAMAP" id="MF_00260">
    <property type="entry name" value="Porphobil_deam"/>
    <property type="match status" value="1"/>
</dbReference>
<dbReference type="InterPro" id="IPR000860">
    <property type="entry name" value="HemC"/>
</dbReference>
<dbReference type="InterPro" id="IPR022419">
    <property type="entry name" value="Porphobilin_deaminase_cofac_BS"/>
</dbReference>
<dbReference type="InterPro" id="IPR022417">
    <property type="entry name" value="Porphobilin_deaminase_N"/>
</dbReference>
<dbReference type="InterPro" id="IPR022418">
    <property type="entry name" value="Porphobilinogen_deaminase_C"/>
</dbReference>
<dbReference type="InterPro" id="IPR036803">
    <property type="entry name" value="Porphobilinogen_deaminase_C_sf"/>
</dbReference>
<dbReference type="NCBIfam" id="TIGR00212">
    <property type="entry name" value="hemC"/>
    <property type="match status" value="1"/>
</dbReference>
<dbReference type="PANTHER" id="PTHR11557">
    <property type="entry name" value="PORPHOBILINOGEN DEAMINASE"/>
    <property type="match status" value="1"/>
</dbReference>
<dbReference type="PANTHER" id="PTHR11557:SF0">
    <property type="entry name" value="PORPHOBILINOGEN DEAMINASE"/>
    <property type="match status" value="1"/>
</dbReference>
<dbReference type="Pfam" id="PF01379">
    <property type="entry name" value="Porphobil_deam"/>
    <property type="match status" value="1"/>
</dbReference>
<dbReference type="Pfam" id="PF03900">
    <property type="entry name" value="Porphobil_deamC"/>
    <property type="match status" value="1"/>
</dbReference>
<dbReference type="PIRSF" id="PIRSF001438">
    <property type="entry name" value="4pyrrol_synth_OHMeBilane_synth"/>
    <property type="match status" value="1"/>
</dbReference>
<dbReference type="PRINTS" id="PR00151">
    <property type="entry name" value="PORPHBDMNASE"/>
</dbReference>
<dbReference type="SUPFAM" id="SSF53850">
    <property type="entry name" value="Periplasmic binding protein-like II"/>
    <property type="match status" value="1"/>
</dbReference>
<dbReference type="SUPFAM" id="SSF54782">
    <property type="entry name" value="Porphobilinogen deaminase (hydroxymethylbilane synthase), C-terminal domain"/>
    <property type="match status" value="1"/>
</dbReference>
<dbReference type="PROSITE" id="PS00533">
    <property type="entry name" value="PORPHOBILINOGEN_DEAM"/>
    <property type="match status" value="1"/>
</dbReference>
<sequence>MNAPKTLVIASRESALAMWQAQYIQGRLQTLYPETEVTILGMTTTGDQILDSPLARIGGKGLFVKELEQALADGRADLAVHSMKDVPMHLPPGFALAAISERDDPRDAFVSNDYPNLASLPAGSIVGTSSLRRQSQLQARFPGLKVESLRGNLQTRLRKLDEGQYAAIILAAAGLKRLGLASRIRESIDPDNSIPAVGQGALGIEINAERLDLLKVLAPLNHPETAACVEAERGMSRALAGSCQVPLGAFAQQHGDTLQMTGFVASIDGKEFLRESVQGPAEQPEALGQALAAKLVALGADRILAALPHE</sequence>